<keyword id="KW-0028">Amino-acid biosynthesis</keyword>
<keyword id="KW-0057">Aromatic amino acid biosynthesis</keyword>
<keyword id="KW-0456">Lyase</keyword>
<keyword id="KW-0704">Schiff base</keyword>
<proteinExistence type="inferred from homology"/>
<protein>
    <recommendedName>
        <fullName evidence="1">3-dehydroquinate dehydratase</fullName>
        <shortName evidence="1">3-dehydroquinase</shortName>
        <ecNumber evidence="1">4.2.1.10</ecNumber>
    </recommendedName>
    <alternativeName>
        <fullName evidence="1">Type I DHQase</fullName>
    </alternativeName>
    <alternativeName>
        <fullName evidence="1">Type I dehydroquinase</fullName>
        <shortName evidence="1">DHQ1</shortName>
    </alternativeName>
</protein>
<sequence length="215" mass="24510">MIATVILADSIKEAIEKIKSSSSDLYELRADSLKDYSKLELLEPYSEKLVVTIRSKDEGGFKELSDEKRLELYSKFLEIKPRYVDVEFRSKIKDEVMEIAKRVGSRVILSYHNFRETPPFGVLYNLLEDMESEGADIVKIVTHASSPKDNIRIIRLYEFADNLIAFCMGSKGKISRIFSSMYSPITYVALDKKAAPGQLTLEELRVILKILGEGR</sequence>
<comment type="function">
    <text evidence="1">Involved in the third step of the chorismate pathway, which leads to the biosynthesis of aromatic amino acids. Catalyzes the cis-dehydration of 3-dehydroquinate (DHQ) and introduces the first double bond of the aromatic ring to yield 3-dehydroshikimate.</text>
</comment>
<comment type="catalytic activity">
    <reaction evidence="1">
        <text>3-dehydroquinate = 3-dehydroshikimate + H2O</text>
        <dbReference type="Rhea" id="RHEA:21096"/>
        <dbReference type="ChEBI" id="CHEBI:15377"/>
        <dbReference type="ChEBI" id="CHEBI:16630"/>
        <dbReference type="ChEBI" id="CHEBI:32364"/>
        <dbReference type="EC" id="4.2.1.10"/>
    </reaction>
</comment>
<comment type="pathway">
    <text evidence="1">Metabolic intermediate biosynthesis; chorismate biosynthesis; chorismate from D-erythrose 4-phosphate and phosphoenolpyruvate: step 3/7.</text>
</comment>
<comment type="subunit">
    <text evidence="1">Homodimer.</text>
</comment>
<comment type="similarity">
    <text evidence="1">Belongs to the type-I 3-dehydroquinase family.</text>
</comment>
<evidence type="ECO:0000255" key="1">
    <source>
        <dbReference type="HAMAP-Rule" id="MF_00214"/>
    </source>
</evidence>
<dbReference type="EC" id="4.2.1.10" evidence="1"/>
<dbReference type="EMBL" id="AJ248284">
    <property type="protein sequence ID" value="CAB49371.1"/>
    <property type="molecule type" value="Genomic_DNA"/>
</dbReference>
<dbReference type="EMBL" id="HE613800">
    <property type="protein sequence ID" value="CCE69832.1"/>
    <property type="molecule type" value="Genomic_DNA"/>
</dbReference>
<dbReference type="PIR" id="D75161">
    <property type="entry name" value="D75161"/>
</dbReference>
<dbReference type="RefSeq" id="WP_010867573.1">
    <property type="nucleotide sequence ID" value="NC_000868.1"/>
</dbReference>
<dbReference type="SMR" id="Q9V1H8"/>
<dbReference type="STRING" id="272844.PAB0299"/>
<dbReference type="KEGG" id="pab:PAB0299"/>
<dbReference type="PATRIC" id="fig|272844.11.peg.476"/>
<dbReference type="eggNOG" id="arCOG02097">
    <property type="taxonomic scope" value="Archaea"/>
</dbReference>
<dbReference type="HOGENOM" id="CLU_064444_2_1_2"/>
<dbReference type="OrthoDB" id="34329at2157"/>
<dbReference type="PhylomeDB" id="Q9V1H8"/>
<dbReference type="UniPathway" id="UPA00053">
    <property type="reaction ID" value="UER00086"/>
</dbReference>
<dbReference type="Proteomes" id="UP000000810">
    <property type="component" value="Chromosome"/>
</dbReference>
<dbReference type="Proteomes" id="UP000009139">
    <property type="component" value="Chromosome"/>
</dbReference>
<dbReference type="GO" id="GO:0003855">
    <property type="term" value="F:3-dehydroquinate dehydratase activity"/>
    <property type="evidence" value="ECO:0007669"/>
    <property type="project" value="UniProtKB-UniRule"/>
</dbReference>
<dbReference type="GO" id="GO:0046279">
    <property type="term" value="P:3,4-dihydroxybenzoate biosynthetic process"/>
    <property type="evidence" value="ECO:0007669"/>
    <property type="project" value="TreeGrafter"/>
</dbReference>
<dbReference type="GO" id="GO:0008652">
    <property type="term" value="P:amino acid biosynthetic process"/>
    <property type="evidence" value="ECO:0007669"/>
    <property type="project" value="UniProtKB-KW"/>
</dbReference>
<dbReference type="GO" id="GO:0009073">
    <property type="term" value="P:aromatic amino acid family biosynthetic process"/>
    <property type="evidence" value="ECO:0007669"/>
    <property type="project" value="UniProtKB-KW"/>
</dbReference>
<dbReference type="GO" id="GO:0009423">
    <property type="term" value="P:chorismate biosynthetic process"/>
    <property type="evidence" value="ECO:0007669"/>
    <property type="project" value="UniProtKB-UniRule"/>
</dbReference>
<dbReference type="CDD" id="cd00502">
    <property type="entry name" value="DHQase_I"/>
    <property type="match status" value="1"/>
</dbReference>
<dbReference type="Gene3D" id="3.20.20.70">
    <property type="entry name" value="Aldolase class I"/>
    <property type="match status" value="1"/>
</dbReference>
<dbReference type="HAMAP" id="MF_00214">
    <property type="entry name" value="AroD"/>
    <property type="match status" value="1"/>
</dbReference>
<dbReference type="InterPro" id="IPR013785">
    <property type="entry name" value="Aldolase_TIM"/>
</dbReference>
<dbReference type="InterPro" id="IPR001381">
    <property type="entry name" value="DHquinase_I"/>
</dbReference>
<dbReference type="InterPro" id="IPR050146">
    <property type="entry name" value="Type-I_3-dehydroquinase"/>
</dbReference>
<dbReference type="NCBIfam" id="TIGR01093">
    <property type="entry name" value="aroD"/>
    <property type="match status" value="1"/>
</dbReference>
<dbReference type="NCBIfam" id="NF002683">
    <property type="entry name" value="PRK02412.2-2"/>
    <property type="match status" value="1"/>
</dbReference>
<dbReference type="PANTHER" id="PTHR43699">
    <property type="entry name" value="3-DEHYDROQUINATE DEHYDRATASE"/>
    <property type="match status" value="1"/>
</dbReference>
<dbReference type="PANTHER" id="PTHR43699:SF1">
    <property type="entry name" value="3-DEHYDROQUINATE DEHYDRATASE"/>
    <property type="match status" value="1"/>
</dbReference>
<dbReference type="Pfam" id="PF01487">
    <property type="entry name" value="DHquinase_I"/>
    <property type="match status" value="1"/>
</dbReference>
<dbReference type="SUPFAM" id="SSF51569">
    <property type="entry name" value="Aldolase"/>
    <property type="match status" value="1"/>
</dbReference>
<accession>Q9V1H8</accession>
<accession>G8ZGF3</accession>
<feature type="chain" id="PRO_0000138833" description="3-dehydroquinate dehydratase">
    <location>
        <begin position="1"/>
        <end position="215"/>
    </location>
</feature>
<feature type="active site" description="Proton donor/acceptor" evidence="1">
    <location>
        <position position="112"/>
    </location>
</feature>
<feature type="active site" description="Schiff-base intermediate with substrate" evidence="1">
    <location>
        <position position="139"/>
    </location>
</feature>
<feature type="binding site" evidence="1">
    <location>
        <begin position="27"/>
        <end position="29"/>
    </location>
    <ligand>
        <name>3-dehydroquinate</name>
        <dbReference type="ChEBI" id="CHEBI:32364"/>
    </ligand>
</feature>
<feature type="binding site" evidence="1">
    <location>
        <position position="54"/>
    </location>
    <ligand>
        <name>3-dehydroquinate</name>
        <dbReference type="ChEBI" id="CHEBI:32364"/>
    </ligand>
</feature>
<feature type="binding site" evidence="1">
    <location>
        <position position="176"/>
    </location>
    <ligand>
        <name>3-dehydroquinate</name>
        <dbReference type="ChEBI" id="CHEBI:32364"/>
    </ligand>
</feature>
<feature type="binding site" evidence="1">
    <location>
        <position position="198"/>
    </location>
    <ligand>
        <name>3-dehydroquinate</name>
        <dbReference type="ChEBI" id="CHEBI:32364"/>
    </ligand>
</feature>
<organism>
    <name type="scientific">Pyrococcus abyssi (strain GE5 / Orsay)</name>
    <dbReference type="NCBI Taxonomy" id="272844"/>
    <lineage>
        <taxon>Archaea</taxon>
        <taxon>Methanobacteriati</taxon>
        <taxon>Methanobacteriota</taxon>
        <taxon>Thermococci</taxon>
        <taxon>Thermococcales</taxon>
        <taxon>Thermococcaceae</taxon>
        <taxon>Pyrococcus</taxon>
    </lineage>
</organism>
<name>AROD_PYRAB</name>
<gene>
    <name evidence="1" type="primary">aroD</name>
    <name type="ordered locus">PYRAB04490</name>
    <name type="ORF">PAB0299</name>
</gene>
<reference key="1">
    <citation type="journal article" date="2003" name="Mol. Microbiol.">
        <title>An integrated analysis of the genome of the hyperthermophilic archaeon Pyrococcus abyssi.</title>
        <authorList>
            <person name="Cohen G.N."/>
            <person name="Barbe V."/>
            <person name="Flament D."/>
            <person name="Galperin M."/>
            <person name="Heilig R."/>
            <person name="Lecompte O."/>
            <person name="Poch O."/>
            <person name="Prieur D."/>
            <person name="Querellou J."/>
            <person name="Ripp R."/>
            <person name="Thierry J.-C."/>
            <person name="Van der Oost J."/>
            <person name="Weissenbach J."/>
            <person name="Zivanovic Y."/>
            <person name="Forterre P."/>
        </authorList>
    </citation>
    <scope>NUCLEOTIDE SEQUENCE [LARGE SCALE GENOMIC DNA]</scope>
    <source>
        <strain>GE5 / Orsay</strain>
    </source>
</reference>
<reference key="2">
    <citation type="journal article" date="2012" name="Curr. Microbiol.">
        <title>Re-annotation of two hyperthermophilic archaea Pyrococcus abyssi GE5 and Pyrococcus furiosus DSM 3638.</title>
        <authorList>
            <person name="Gao J."/>
            <person name="Wang J."/>
        </authorList>
    </citation>
    <scope>GENOME REANNOTATION</scope>
    <source>
        <strain>GE5 / Orsay</strain>
    </source>
</reference>